<organism>
    <name type="scientific">Geobacter sp. (strain M21)</name>
    <dbReference type="NCBI Taxonomy" id="443144"/>
    <lineage>
        <taxon>Bacteria</taxon>
        <taxon>Pseudomonadati</taxon>
        <taxon>Thermodesulfobacteriota</taxon>
        <taxon>Desulfuromonadia</taxon>
        <taxon>Geobacterales</taxon>
        <taxon>Geobacteraceae</taxon>
        <taxon>Geobacter</taxon>
    </lineage>
</organism>
<evidence type="ECO:0000255" key="1">
    <source>
        <dbReference type="HAMAP-Rule" id="MF_00074"/>
    </source>
</evidence>
<gene>
    <name evidence="1" type="primary">rsmG</name>
    <name type="ordered locus">GM21_4146</name>
</gene>
<feature type="chain" id="PRO_1000202501" description="Ribosomal RNA small subunit methyltransferase G">
    <location>
        <begin position="1"/>
        <end position="217"/>
    </location>
</feature>
<feature type="binding site" evidence="1">
    <location>
        <position position="78"/>
    </location>
    <ligand>
        <name>S-adenosyl-L-methionine</name>
        <dbReference type="ChEBI" id="CHEBI:59789"/>
    </ligand>
</feature>
<feature type="binding site" evidence="1">
    <location>
        <position position="83"/>
    </location>
    <ligand>
        <name>S-adenosyl-L-methionine</name>
        <dbReference type="ChEBI" id="CHEBI:59789"/>
    </ligand>
</feature>
<feature type="binding site" evidence="1">
    <location>
        <begin position="129"/>
        <end position="130"/>
    </location>
    <ligand>
        <name>S-adenosyl-L-methionine</name>
        <dbReference type="ChEBI" id="CHEBI:59789"/>
    </ligand>
</feature>
<feature type="binding site" evidence="1">
    <location>
        <position position="146"/>
    </location>
    <ligand>
        <name>S-adenosyl-L-methionine</name>
        <dbReference type="ChEBI" id="CHEBI:59789"/>
    </ligand>
</feature>
<comment type="function">
    <text evidence="1">Specifically methylates the N7 position of guanine in position 527 of 16S rRNA.</text>
</comment>
<comment type="catalytic activity">
    <reaction evidence="1">
        <text>guanosine(527) in 16S rRNA + S-adenosyl-L-methionine = N(7)-methylguanosine(527) in 16S rRNA + S-adenosyl-L-homocysteine</text>
        <dbReference type="Rhea" id="RHEA:42732"/>
        <dbReference type="Rhea" id="RHEA-COMP:10209"/>
        <dbReference type="Rhea" id="RHEA-COMP:10210"/>
        <dbReference type="ChEBI" id="CHEBI:57856"/>
        <dbReference type="ChEBI" id="CHEBI:59789"/>
        <dbReference type="ChEBI" id="CHEBI:74269"/>
        <dbReference type="ChEBI" id="CHEBI:74480"/>
        <dbReference type="EC" id="2.1.1.170"/>
    </reaction>
</comment>
<comment type="subcellular location">
    <subcellularLocation>
        <location evidence="1">Cytoplasm</location>
    </subcellularLocation>
</comment>
<comment type="similarity">
    <text evidence="1">Belongs to the methyltransferase superfamily. RNA methyltransferase RsmG family.</text>
</comment>
<keyword id="KW-0963">Cytoplasm</keyword>
<keyword id="KW-0489">Methyltransferase</keyword>
<keyword id="KW-0698">rRNA processing</keyword>
<keyword id="KW-0949">S-adenosyl-L-methionine</keyword>
<keyword id="KW-0808">Transferase</keyword>
<dbReference type="EC" id="2.1.1.170" evidence="1"/>
<dbReference type="EMBL" id="CP001661">
    <property type="protein sequence ID" value="ACT20161.1"/>
    <property type="molecule type" value="Genomic_DNA"/>
</dbReference>
<dbReference type="SMR" id="C6DYR8"/>
<dbReference type="STRING" id="443144.GM21_4146"/>
<dbReference type="KEGG" id="gem:GM21_4146"/>
<dbReference type="eggNOG" id="COG0357">
    <property type="taxonomic scope" value="Bacteria"/>
</dbReference>
<dbReference type="HOGENOM" id="CLU_065341_2_0_7"/>
<dbReference type="OrthoDB" id="9808773at2"/>
<dbReference type="GO" id="GO:0005829">
    <property type="term" value="C:cytosol"/>
    <property type="evidence" value="ECO:0007669"/>
    <property type="project" value="TreeGrafter"/>
</dbReference>
<dbReference type="GO" id="GO:0070043">
    <property type="term" value="F:rRNA (guanine-N7-)-methyltransferase activity"/>
    <property type="evidence" value="ECO:0007669"/>
    <property type="project" value="UniProtKB-UniRule"/>
</dbReference>
<dbReference type="CDD" id="cd02440">
    <property type="entry name" value="AdoMet_MTases"/>
    <property type="match status" value="1"/>
</dbReference>
<dbReference type="Gene3D" id="3.40.50.150">
    <property type="entry name" value="Vaccinia Virus protein VP39"/>
    <property type="match status" value="1"/>
</dbReference>
<dbReference type="HAMAP" id="MF_00074">
    <property type="entry name" value="16SrRNA_methyltr_G"/>
    <property type="match status" value="1"/>
</dbReference>
<dbReference type="InterPro" id="IPR003682">
    <property type="entry name" value="rRNA_ssu_MeTfrase_G"/>
</dbReference>
<dbReference type="InterPro" id="IPR029063">
    <property type="entry name" value="SAM-dependent_MTases_sf"/>
</dbReference>
<dbReference type="NCBIfam" id="TIGR00138">
    <property type="entry name" value="rsmG_gidB"/>
    <property type="match status" value="1"/>
</dbReference>
<dbReference type="PANTHER" id="PTHR31760">
    <property type="entry name" value="S-ADENOSYL-L-METHIONINE-DEPENDENT METHYLTRANSFERASES SUPERFAMILY PROTEIN"/>
    <property type="match status" value="1"/>
</dbReference>
<dbReference type="PANTHER" id="PTHR31760:SF0">
    <property type="entry name" value="S-ADENOSYL-L-METHIONINE-DEPENDENT METHYLTRANSFERASES SUPERFAMILY PROTEIN"/>
    <property type="match status" value="1"/>
</dbReference>
<dbReference type="Pfam" id="PF02527">
    <property type="entry name" value="GidB"/>
    <property type="match status" value="1"/>
</dbReference>
<dbReference type="PIRSF" id="PIRSF003078">
    <property type="entry name" value="GidB"/>
    <property type="match status" value="1"/>
</dbReference>
<dbReference type="SUPFAM" id="SSF53335">
    <property type="entry name" value="S-adenosyl-L-methionine-dependent methyltransferases"/>
    <property type="match status" value="1"/>
</dbReference>
<accession>C6DYR8</accession>
<proteinExistence type="inferred from homology"/>
<name>RSMG_GEOSM</name>
<protein>
    <recommendedName>
        <fullName evidence="1">Ribosomal RNA small subunit methyltransferase G</fullName>
        <ecNumber evidence="1">2.1.1.170</ecNumber>
    </recommendedName>
    <alternativeName>
        <fullName evidence="1">16S rRNA 7-methylguanosine methyltransferase</fullName>
        <shortName evidence="1">16S rRNA m7G methyltransferase</shortName>
    </alternativeName>
</protein>
<sequence>MIQSAKELLKKGAAELGVQLDAAQLESLNLFAEELKKWNRKINLTAITGDEEIALKHLVDSLSLLKAVRGPGRLLDIGSGGGFPCIPVKIVQPDLEMVSVDAVVKKISFQKQAVRLLNLTGFTALHVRAETLAQEYAASFDWVVSRAFSDIPSFVAMALPVLKPEGRIVAMKGRSAAEEVEGAKDKLDALGAGVLEVMDFTLPGTGDARSLVVIGRN</sequence>
<reference key="1">
    <citation type="submission" date="2009-07" db="EMBL/GenBank/DDBJ databases">
        <title>Complete sequence of Geobacter sp. M21.</title>
        <authorList>
            <consortium name="US DOE Joint Genome Institute"/>
            <person name="Lucas S."/>
            <person name="Copeland A."/>
            <person name="Lapidus A."/>
            <person name="Glavina del Rio T."/>
            <person name="Dalin E."/>
            <person name="Tice H."/>
            <person name="Bruce D."/>
            <person name="Goodwin L."/>
            <person name="Pitluck S."/>
            <person name="Saunders E."/>
            <person name="Brettin T."/>
            <person name="Detter J.C."/>
            <person name="Han C."/>
            <person name="Larimer F."/>
            <person name="Land M."/>
            <person name="Hauser L."/>
            <person name="Kyrpides N."/>
            <person name="Ovchinnikova G."/>
            <person name="Lovley D."/>
        </authorList>
    </citation>
    <scope>NUCLEOTIDE SEQUENCE [LARGE SCALE GENOMIC DNA]</scope>
    <source>
        <strain>M21</strain>
    </source>
</reference>